<protein>
    <recommendedName>
        <fullName>Alpha-elicitin capsicein</fullName>
    </recommendedName>
</protein>
<sequence>ATCTTTQQTAAYVALVSILSDSSFNQCATDSGYSMLTATALPTTAQYKLMCASTACNTMITKIVSLNPPDCELTVPTSGLVLNVYSYANGFSATCASL</sequence>
<proteinExistence type="evidence at protein level"/>
<evidence type="ECO:0000305" key="1"/>
<accession>P15571</accession>
<dbReference type="PIR" id="S05527">
    <property type="entry name" value="S05527"/>
</dbReference>
<dbReference type="PIR" id="S42360">
    <property type="entry name" value="S42360"/>
</dbReference>
<dbReference type="SMR" id="P15571"/>
<dbReference type="VEuPathDB" id="FungiDB:DVH05_021108"/>
<dbReference type="GO" id="GO:0005576">
    <property type="term" value="C:extracellular region"/>
    <property type="evidence" value="ECO:0007669"/>
    <property type="project" value="UniProtKB-SubCell"/>
</dbReference>
<dbReference type="GO" id="GO:0001907">
    <property type="term" value="P:symbiont-mediated killing of host cell"/>
    <property type="evidence" value="ECO:0000314"/>
    <property type="project" value="PAMGO_VMD"/>
</dbReference>
<dbReference type="GO" id="GO:0052040">
    <property type="term" value="P:symbiont-mediated perturbation of host programmed cell death"/>
    <property type="evidence" value="ECO:0007669"/>
    <property type="project" value="UniProtKB-KW"/>
</dbReference>
<dbReference type="Gene3D" id="1.10.239.10">
    <property type="entry name" value="Elicitin domain"/>
    <property type="match status" value="1"/>
</dbReference>
<dbReference type="InterPro" id="IPR002200">
    <property type="entry name" value="Elicitin"/>
</dbReference>
<dbReference type="InterPro" id="IPR036470">
    <property type="entry name" value="Elicitin_sf"/>
</dbReference>
<dbReference type="Pfam" id="PF00964">
    <property type="entry name" value="Elicitin"/>
    <property type="match status" value="1"/>
</dbReference>
<dbReference type="PRINTS" id="PR00948">
    <property type="entry name" value="ELICITIN"/>
</dbReference>
<dbReference type="SMART" id="SM01187">
    <property type="entry name" value="Elicitin"/>
    <property type="match status" value="1"/>
</dbReference>
<dbReference type="SUPFAM" id="SSF48647">
    <property type="entry name" value="Fungal elicitin"/>
    <property type="match status" value="1"/>
</dbReference>
<name>ELIA_PHYCP</name>
<keyword id="KW-0903">Direct protein sequencing</keyword>
<keyword id="KW-1015">Disulfide bond</keyword>
<keyword id="KW-0928">Hypersensitive response elicitation</keyword>
<keyword id="KW-0964">Secreted</keyword>
<organism>
    <name type="scientific">Phytophthora capsici</name>
    <dbReference type="NCBI Taxonomy" id="4784"/>
    <lineage>
        <taxon>Eukaryota</taxon>
        <taxon>Sar</taxon>
        <taxon>Stramenopiles</taxon>
        <taxon>Oomycota</taxon>
        <taxon>Peronosporales</taxon>
        <taxon>Peronosporaceae</taxon>
        <taxon>Phytophthora</taxon>
    </lineage>
</organism>
<comment type="function">
    <text>Induces local and distal defense responses (incompatible hypersensitive reaction) in plants from the solanaceae and cruciferae families. Elicits leaf necrosis and causes the accumulation of pathogenesis-related proteins. Might interact with the lipidic molecules of the plasma membrane.</text>
</comment>
<comment type="subcellular location">
    <subcellularLocation>
        <location>Secreted</location>
    </subcellularLocation>
</comment>
<comment type="similarity">
    <text evidence="1">Belongs to the elicitin family.</text>
</comment>
<reference key="1">
    <citation type="journal article" date="1989" name="Eur. J. Biochem.">
        <title>Structure and activity of proteins from pathogenic fungi Phytophthora eliciting necrosis and acquired resistance in tobacco.</title>
        <authorList>
            <person name="Ricci P."/>
            <person name="Bonnet P."/>
            <person name="Huet J.-C."/>
            <person name="Sallantin M."/>
            <person name="Beauvais-Cante F."/>
            <person name="Brunetau M."/>
            <person name="Billard V."/>
            <person name="Michel G."/>
            <person name="Pernollet J.-C."/>
        </authorList>
    </citation>
    <scope>PROTEIN SEQUENCE</scope>
    <source>
        <strain>Isolate 147</strain>
    </source>
</reference>
<reference key="2">
    <citation type="journal article" date="1994" name="Eur. J. Biochem.">
        <title>Resonance assignment, cysteine-pairing elucidation and secondary-structure determination of capsicein, an alpha-elicitin, by three-dimensional 1H NMR.</title>
        <authorList>
            <person name="Bouaziz S."/>
            <person name="van Heijenoort C."/>
            <person name="Guittet E."/>
            <person name="Huet J.-C."/>
            <person name="Pernollet J.-C."/>
        </authorList>
    </citation>
    <scope>STRUCTURE BY NMR</scope>
</reference>
<reference key="3">
    <citation type="journal article" date="1994" name="Biochemistry">
        <title>1H and 15N resonance assignment and secondary structure of capsicein, an alpha-elicitin, determined by three-dimensional heteronuclear NMR.</title>
        <authorList>
            <person name="Bouaziz S."/>
            <person name="van Heijenoort C."/>
            <person name="Huet J.-C."/>
            <person name="Pernollet J.-C."/>
            <person name="Guittet E."/>
        </authorList>
    </citation>
    <scope>STRUCTURE BY NMR</scope>
</reference>
<feature type="chain" id="PRO_0000185437" description="Alpha-elicitin capsicein">
    <location>
        <begin position="1"/>
        <end position="98"/>
    </location>
</feature>
<feature type="disulfide bond">
    <location>
        <begin position="3"/>
        <end position="71"/>
    </location>
</feature>
<feature type="disulfide bond">
    <location>
        <begin position="27"/>
        <end position="56"/>
    </location>
</feature>
<feature type="disulfide bond">
    <location>
        <begin position="51"/>
        <end position="95"/>
    </location>
</feature>